<proteinExistence type="inferred from homology"/>
<evidence type="ECO:0000255" key="1">
    <source>
        <dbReference type="HAMAP-Rule" id="MF_00187"/>
    </source>
</evidence>
<gene>
    <name evidence="1" type="primary">fdhD</name>
    <name type="ordered locus">SH0772</name>
</gene>
<name>FDHD_STAHJ</name>
<reference key="1">
    <citation type="journal article" date="2005" name="J. Bacteriol.">
        <title>Whole-genome sequencing of Staphylococcus haemolyticus uncovers the extreme plasticity of its genome and the evolution of human-colonizing staphylococcal species.</title>
        <authorList>
            <person name="Takeuchi F."/>
            <person name="Watanabe S."/>
            <person name="Baba T."/>
            <person name="Yuzawa H."/>
            <person name="Ito T."/>
            <person name="Morimoto Y."/>
            <person name="Kuroda M."/>
            <person name="Cui L."/>
            <person name="Takahashi M."/>
            <person name="Ankai A."/>
            <person name="Baba S."/>
            <person name="Fukui S."/>
            <person name="Lee J.C."/>
            <person name="Hiramatsu K."/>
        </authorList>
    </citation>
    <scope>NUCLEOTIDE SEQUENCE [LARGE SCALE GENOMIC DNA]</scope>
    <source>
        <strain>JCSC1435</strain>
    </source>
</reference>
<organism>
    <name type="scientific">Staphylococcus haemolyticus (strain JCSC1435)</name>
    <dbReference type="NCBI Taxonomy" id="279808"/>
    <lineage>
        <taxon>Bacteria</taxon>
        <taxon>Bacillati</taxon>
        <taxon>Bacillota</taxon>
        <taxon>Bacilli</taxon>
        <taxon>Bacillales</taxon>
        <taxon>Staphylococcaceae</taxon>
        <taxon>Staphylococcus</taxon>
    </lineage>
</organism>
<accession>Q4L8E4</accession>
<feature type="chain" id="PRO_1000020826" description="Sulfur carrier protein FdhD">
    <location>
        <begin position="1"/>
        <end position="264"/>
    </location>
</feature>
<feature type="active site" description="Cysteine persulfide intermediate" evidence="1">
    <location>
        <position position="107"/>
    </location>
</feature>
<comment type="function">
    <text evidence="1">Required for formate dehydrogenase (FDH) activity. Acts as a sulfur carrier protein that transfers sulfur from IscS to the molybdenum cofactor prior to its insertion into FDH.</text>
</comment>
<comment type="subcellular location">
    <subcellularLocation>
        <location evidence="1">Cytoplasm</location>
    </subcellularLocation>
</comment>
<comment type="similarity">
    <text evidence="1">Belongs to the FdhD family.</text>
</comment>
<sequence>MNKDVLQGQSIIRYEEGQLIQTTDSYVTEFPLTINVNGTEFATVICSPTHMEELVVGFLASEGAIYKKEEIKSLQIDDSKGFAHVELTKDLGDRFEYSTKRMIASCCGKSREFYFHNDAAIAKTSMSKITLTPKQVLNMMTGLQTASTLFKQTGGLHNAAISDGDEFFEHRQDIGRHNALDKLYGFCLERRIPVRNKVLIFSGRISSEILLKAAKIGVGVILSKSAPTTLAITLANDLNITAIGFIRDGSFNIYSHPERIKATE</sequence>
<dbReference type="EMBL" id="AP006716">
    <property type="protein sequence ID" value="BAE04081.1"/>
    <property type="molecule type" value="Genomic_DNA"/>
</dbReference>
<dbReference type="RefSeq" id="WP_011275095.1">
    <property type="nucleotide sequence ID" value="NC_007168.1"/>
</dbReference>
<dbReference type="SMR" id="Q4L8E4"/>
<dbReference type="GeneID" id="93780162"/>
<dbReference type="KEGG" id="sha:SH0772"/>
<dbReference type="eggNOG" id="COG1526">
    <property type="taxonomic scope" value="Bacteria"/>
</dbReference>
<dbReference type="HOGENOM" id="CLU_056887_4_1_9"/>
<dbReference type="OrthoDB" id="9782042at2"/>
<dbReference type="Proteomes" id="UP000000543">
    <property type="component" value="Chromosome"/>
</dbReference>
<dbReference type="GO" id="GO:0005737">
    <property type="term" value="C:cytoplasm"/>
    <property type="evidence" value="ECO:0007669"/>
    <property type="project" value="UniProtKB-SubCell"/>
</dbReference>
<dbReference type="GO" id="GO:0097163">
    <property type="term" value="F:sulfur carrier activity"/>
    <property type="evidence" value="ECO:0007669"/>
    <property type="project" value="UniProtKB-UniRule"/>
</dbReference>
<dbReference type="GO" id="GO:0016783">
    <property type="term" value="F:sulfurtransferase activity"/>
    <property type="evidence" value="ECO:0007669"/>
    <property type="project" value="InterPro"/>
</dbReference>
<dbReference type="GO" id="GO:0006777">
    <property type="term" value="P:Mo-molybdopterin cofactor biosynthetic process"/>
    <property type="evidence" value="ECO:0007669"/>
    <property type="project" value="UniProtKB-UniRule"/>
</dbReference>
<dbReference type="Gene3D" id="3.10.20.10">
    <property type="match status" value="1"/>
</dbReference>
<dbReference type="Gene3D" id="3.40.140.10">
    <property type="entry name" value="Cytidine Deaminase, domain 2"/>
    <property type="match status" value="1"/>
</dbReference>
<dbReference type="HAMAP" id="MF_00187">
    <property type="entry name" value="FdhD"/>
    <property type="match status" value="1"/>
</dbReference>
<dbReference type="InterPro" id="IPR016193">
    <property type="entry name" value="Cytidine_deaminase-like"/>
</dbReference>
<dbReference type="InterPro" id="IPR003786">
    <property type="entry name" value="FdhD"/>
</dbReference>
<dbReference type="NCBIfam" id="TIGR00129">
    <property type="entry name" value="fdhD_narQ"/>
    <property type="match status" value="1"/>
</dbReference>
<dbReference type="PANTHER" id="PTHR30592">
    <property type="entry name" value="FORMATE DEHYDROGENASE"/>
    <property type="match status" value="1"/>
</dbReference>
<dbReference type="PANTHER" id="PTHR30592:SF1">
    <property type="entry name" value="SULFUR CARRIER PROTEIN FDHD"/>
    <property type="match status" value="1"/>
</dbReference>
<dbReference type="Pfam" id="PF02634">
    <property type="entry name" value="FdhD-NarQ"/>
    <property type="match status" value="1"/>
</dbReference>
<dbReference type="PIRSF" id="PIRSF015626">
    <property type="entry name" value="FdhD"/>
    <property type="match status" value="1"/>
</dbReference>
<dbReference type="SUPFAM" id="SSF53927">
    <property type="entry name" value="Cytidine deaminase-like"/>
    <property type="match status" value="1"/>
</dbReference>
<keyword id="KW-0963">Cytoplasm</keyword>
<keyword id="KW-0501">Molybdenum cofactor biosynthesis</keyword>
<protein>
    <recommendedName>
        <fullName evidence="1">Sulfur carrier protein FdhD</fullName>
    </recommendedName>
</protein>